<proteinExistence type="predicted"/>
<organism>
    <name type="scientific">Aquifex aeolicus (strain VF5)</name>
    <dbReference type="NCBI Taxonomy" id="224324"/>
    <lineage>
        <taxon>Bacteria</taxon>
        <taxon>Pseudomonadati</taxon>
        <taxon>Aquificota</taxon>
        <taxon>Aquificia</taxon>
        <taxon>Aquificales</taxon>
        <taxon>Aquificaceae</taxon>
        <taxon>Aquifex</taxon>
    </lineage>
</organism>
<feature type="chain" id="PRO_0000186932" description="Uncharacterized protein aq_1525">
    <location>
        <begin position="1"/>
        <end position="194"/>
    </location>
</feature>
<gene>
    <name type="ordered locus">aq_1525</name>
</gene>
<accession>O67485</accession>
<sequence>MEYCRDLSEKLREVIRKETVKLPIQPIQIISIERHEFKVLLNKKGIKIVNPPNLTKNLGVYLILSFRLKEKIREILGEKFEHLIKVLGDIISDNTLETPLITLGEGKNLKKKFNEEFIETLENASYSNEEAGKLREFLKTLYALALCNSREEITLDLCVILLHSEQHATLEKQLLSLVQPLLKIDKKPKKELNL</sequence>
<protein>
    <recommendedName>
        <fullName>Uncharacterized protein aq_1525</fullName>
    </recommendedName>
</protein>
<name>Y1525_AQUAE</name>
<reference key="1">
    <citation type="journal article" date="1998" name="Nature">
        <title>The complete genome of the hyperthermophilic bacterium Aquifex aeolicus.</title>
        <authorList>
            <person name="Deckert G."/>
            <person name="Warren P.V."/>
            <person name="Gaasterland T."/>
            <person name="Young W.G."/>
            <person name="Lenox A.L."/>
            <person name="Graham D.E."/>
            <person name="Overbeek R."/>
            <person name="Snead M.A."/>
            <person name="Keller M."/>
            <person name="Aujay M."/>
            <person name="Huber R."/>
            <person name="Feldman R.A."/>
            <person name="Short J.M."/>
            <person name="Olsen G.J."/>
            <person name="Swanson R.V."/>
        </authorList>
    </citation>
    <scope>NUCLEOTIDE SEQUENCE [LARGE SCALE GENOMIC DNA]</scope>
    <source>
        <strain>VF5</strain>
    </source>
</reference>
<keyword id="KW-1185">Reference proteome</keyword>
<dbReference type="EMBL" id="AE000657">
    <property type="protein sequence ID" value="AAC07451.1"/>
    <property type="molecule type" value="Genomic_DNA"/>
</dbReference>
<dbReference type="PIR" id="C70432">
    <property type="entry name" value="C70432"/>
</dbReference>
<dbReference type="RefSeq" id="NP_214050.1">
    <property type="nucleotide sequence ID" value="NC_000918.1"/>
</dbReference>
<dbReference type="RefSeq" id="WP_010880988.1">
    <property type="nucleotide sequence ID" value="NC_000918.1"/>
</dbReference>
<dbReference type="STRING" id="224324.aq_1525"/>
<dbReference type="EnsemblBacteria" id="AAC07451">
    <property type="protein sequence ID" value="AAC07451"/>
    <property type="gene ID" value="aq_1525"/>
</dbReference>
<dbReference type="KEGG" id="aae:aq_1525"/>
<dbReference type="HOGENOM" id="CLU_1399958_0_0_0"/>
<dbReference type="InParanoid" id="O67485"/>
<dbReference type="Proteomes" id="UP000000798">
    <property type="component" value="Chromosome"/>
</dbReference>